<sequence>MKSDIHPAYEETTVVCGCGNTFQTRSTKPGGRIVVEVCSQCHPFYTGKQKILDSGGRVARFEKRYGKRKVGADKAVSTGK</sequence>
<comment type="function">
    <text evidence="1">Binds the 23S rRNA.</text>
</comment>
<comment type="cofactor">
    <cofactor evidence="1">
        <name>Zn(2+)</name>
        <dbReference type="ChEBI" id="CHEBI:29105"/>
    </cofactor>
    <text evidence="1">Binds 1 zinc ion per subunit.</text>
</comment>
<comment type="subunit">
    <text evidence="1">Part of the 50S ribosomal subunit.</text>
</comment>
<comment type="similarity">
    <text evidence="1">Belongs to the bacterial ribosomal protein bL31 family. Type A subfamily.</text>
</comment>
<accession>P66188</accession>
<accession>A0A1R3XYW7</accession>
<accession>Q10608</accession>
<accession>X2BHB4</accession>
<organism>
    <name type="scientific">Mycobacterium bovis (strain ATCC BAA-935 / AF2122/97)</name>
    <dbReference type="NCBI Taxonomy" id="233413"/>
    <lineage>
        <taxon>Bacteria</taxon>
        <taxon>Bacillati</taxon>
        <taxon>Actinomycetota</taxon>
        <taxon>Actinomycetes</taxon>
        <taxon>Mycobacteriales</taxon>
        <taxon>Mycobacteriaceae</taxon>
        <taxon>Mycobacterium</taxon>
        <taxon>Mycobacterium tuberculosis complex</taxon>
    </lineage>
</organism>
<dbReference type="EMBL" id="LT708304">
    <property type="protein sequence ID" value="SIT99933.1"/>
    <property type="molecule type" value="Genomic_DNA"/>
</dbReference>
<dbReference type="RefSeq" id="NP_854984.1">
    <property type="nucleotide sequence ID" value="NC_002945.3"/>
</dbReference>
<dbReference type="RefSeq" id="WP_003406668.1">
    <property type="nucleotide sequence ID" value="NC_002945.4"/>
</dbReference>
<dbReference type="SMR" id="P66188"/>
<dbReference type="GeneID" id="45425272"/>
<dbReference type="KEGG" id="mbo:BQ2027_MB1330"/>
<dbReference type="PATRIC" id="fig|233413.5.peg.1458"/>
<dbReference type="Proteomes" id="UP000001419">
    <property type="component" value="Chromosome"/>
</dbReference>
<dbReference type="GO" id="GO:1990904">
    <property type="term" value="C:ribonucleoprotein complex"/>
    <property type="evidence" value="ECO:0007669"/>
    <property type="project" value="UniProtKB-KW"/>
</dbReference>
<dbReference type="GO" id="GO:0005840">
    <property type="term" value="C:ribosome"/>
    <property type="evidence" value="ECO:0007669"/>
    <property type="project" value="UniProtKB-KW"/>
</dbReference>
<dbReference type="GO" id="GO:0046872">
    <property type="term" value="F:metal ion binding"/>
    <property type="evidence" value="ECO:0007669"/>
    <property type="project" value="UniProtKB-KW"/>
</dbReference>
<dbReference type="GO" id="GO:0019843">
    <property type="term" value="F:rRNA binding"/>
    <property type="evidence" value="ECO:0007669"/>
    <property type="project" value="UniProtKB-KW"/>
</dbReference>
<dbReference type="GO" id="GO:0003735">
    <property type="term" value="F:structural constituent of ribosome"/>
    <property type="evidence" value="ECO:0007669"/>
    <property type="project" value="InterPro"/>
</dbReference>
<dbReference type="GO" id="GO:0006412">
    <property type="term" value="P:translation"/>
    <property type="evidence" value="ECO:0007669"/>
    <property type="project" value="UniProtKB-UniRule"/>
</dbReference>
<dbReference type="Gene3D" id="4.10.830.30">
    <property type="entry name" value="Ribosomal protein L31"/>
    <property type="match status" value="1"/>
</dbReference>
<dbReference type="HAMAP" id="MF_00501">
    <property type="entry name" value="Ribosomal_bL31_1"/>
    <property type="match status" value="1"/>
</dbReference>
<dbReference type="InterPro" id="IPR034704">
    <property type="entry name" value="Ribosomal_bL28/bL31-like_sf"/>
</dbReference>
<dbReference type="InterPro" id="IPR002150">
    <property type="entry name" value="Ribosomal_bL31"/>
</dbReference>
<dbReference type="InterPro" id="IPR027491">
    <property type="entry name" value="Ribosomal_bL31_A"/>
</dbReference>
<dbReference type="InterPro" id="IPR042105">
    <property type="entry name" value="Ribosomal_bL31_sf"/>
</dbReference>
<dbReference type="NCBIfam" id="TIGR00105">
    <property type="entry name" value="L31"/>
    <property type="match status" value="1"/>
</dbReference>
<dbReference type="NCBIfam" id="NF000612">
    <property type="entry name" value="PRK00019.1"/>
    <property type="match status" value="1"/>
</dbReference>
<dbReference type="NCBIfam" id="NF001809">
    <property type="entry name" value="PRK00528.1"/>
    <property type="match status" value="1"/>
</dbReference>
<dbReference type="PANTHER" id="PTHR33280">
    <property type="entry name" value="50S RIBOSOMAL PROTEIN L31, CHLOROPLASTIC"/>
    <property type="match status" value="1"/>
</dbReference>
<dbReference type="PANTHER" id="PTHR33280:SF1">
    <property type="entry name" value="LARGE RIBOSOMAL SUBUNIT PROTEIN BL31C"/>
    <property type="match status" value="1"/>
</dbReference>
<dbReference type="Pfam" id="PF01197">
    <property type="entry name" value="Ribosomal_L31"/>
    <property type="match status" value="1"/>
</dbReference>
<dbReference type="PRINTS" id="PR01249">
    <property type="entry name" value="RIBOSOMALL31"/>
</dbReference>
<dbReference type="SUPFAM" id="SSF143800">
    <property type="entry name" value="L28p-like"/>
    <property type="match status" value="1"/>
</dbReference>
<dbReference type="PROSITE" id="PS01143">
    <property type="entry name" value="RIBOSOMAL_L31"/>
    <property type="match status" value="1"/>
</dbReference>
<proteinExistence type="inferred from homology"/>
<feature type="chain" id="PRO_0000173133" description="Large ribosomal subunit protein bL31">
    <location>
        <begin position="1"/>
        <end position="80"/>
    </location>
</feature>
<feature type="binding site" evidence="1">
    <location>
        <position position="16"/>
    </location>
    <ligand>
        <name>Zn(2+)</name>
        <dbReference type="ChEBI" id="CHEBI:29105"/>
    </ligand>
</feature>
<feature type="binding site" evidence="1">
    <location>
        <position position="18"/>
    </location>
    <ligand>
        <name>Zn(2+)</name>
        <dbReference type="ChEBI" id="CHEBI:29105"/>
    </ligand>
</feature>
<feature type="binding site" evidence="1">
    <location>
        <position position="38"/>
    </location>
    <ligand>
        <name>Zn(2+)</name>
        <dbReference type="ChEBI" id="CHEBI:29105"/>
    </ligand>
</feature>
<feature type="binding site" evidence="1">
    <location>
        <position position="41"/>
    </location>
    <ligand>
        <name>Zn(2+)</name>
        <dbReference type="ChEBI" id="CHEBI:29105"/>
    </ligand>
</feature>
<reference key="1">
    <citation type="journal article" date="2003" name="Proc. Natl. Acad. Sci. U.S.A.">
        <title>The complete genome sequence of Mycobacterium bovis.</title>
        <authorList>
            <person name="Garnier T."/>
            <person name="Eiglmeier K."/>
            <person name="Camus J.-C."/>
            <person name="Medina N."/>
            <person name="Mansoor H."/>
            <person name="Pryor M."/>
            <person name="Duthoy S."/>
            <person name="Grondin S."/>
            <person name="Lacroix C."/>
            <person name="Monsempe C."/>
            <person name="Simon S."/>
            <person name="Harris B."/>
            <person name="Atkin R."/>
            <person name="Doggett J."/>
            <person name="Mayes R."/>
            <person name="Keating L."/>
            <person name="Wheeler P.R."/>
            <person name="Parkhill J."/>
            <person name="Barrell B.G."/>
            <person name="Cole S.T."/>
            <person name="Gordon S.V."/>
            <person name="Hewinson R.G."/>
        </authorList>
    </citation>
    <scope>NUCLEOTIDE SEQUENCE [LARGE SCALE GENOMIC DNA]</scope>
    <source>
        <strain>ATCC BAA-935 / AF2122/97</strain>
    </source>
</reference>
<reference key="2">
    <citation type="journal article" date="2017" name="Genome Announc.">
        <title>Updated reference genome sequence and annotation of Mycobacterium bovis AF2122/97.</title>
        <authorList>
            <person name="Malone K.M."/>
            <person name="Farrell D."/>
            <person name="Stuber T.P."/>
            <person name="Schubert O.T."/>
            <person name="Aebersold R."/>
            <person name="Robbe-Austerman S."/>
            <person name="Gordon S.V."/>
        </authorList>
    </citation>
    <scope>NUCLEOTIDE SEQUENCE [LARGE SCALE GENOMIC DNA]</scope>
    <scope>GENOME REANNOTATION</scope>
    <source>
        <strain>ATCC BAA-935 / AF2122/97</strain>
    </source>
</reference>
<evidence type="ECO:0000255" key="1">
    <source>
        <dbReference type="HAMAP-Rule" id="MF_00501"/>
    </source>
</evidence>
<evidence type="ECO:0000305" key="2"/>
<name>RL31_MYCBO</name>
<protein>
    <recommendedName>
        <fullName evidence="1">Large ribosomal subunit protein bL31</fullName>
    </recommendedName>
    <alternativeName>
        <fullName evidence="2">50S ribosomal protein L31</fullName>
    </alternativeName>
</protein>
<keyword id="KW-0479">Metal-binding</keyword>
<keyword id="KW-1185">Reference proteome</keyword>
<keyword id="KW-0687">Ribonucleoprotein</keyword>
<keyword id="KW-0689">Ribosomal protein</keyword>
<keyword id="KW-0694">RNA-binding</keyword>
<keyword id="KW-0699">rRNA-binding</keyword>
<keyword id="KW-0862">Zinc</keyword>
<gene>
    <name evidence="1" type="primary">rpmE</name>
    <name type="ordered locus">BQ2027_MB1330</name>
</gene>